<reference key="1">
    <citation type="journal article" date="1996" name="J. Mol. Biol.">
        <title>Isolation, characterization and evolution of nine pufferfish (Fugu rubripes) actin genes.</title>
        <authorList>
            <person name="Venkatesh B."/>
            <person name="Tay B.H."/>
            <person name="Elgar G."/>
            <person name="Brenner S."/>
        </authorList>
    </citation>
    <scope>NUCLEOTIDE SEQUENCE [GENOMIC DNA]</scope>
</reference>
<organism>
    <name type="scientific">Takifugu rubripes</name>
    <name type="common">Japanese pufferfish</name>
    <name type="synonym">Fugu rubripes</name>
    <dbReference type="NCBI Taxonomy" id="31033"/>
    <lineage>
        <taxon>Eukaryota</taxon>
        <taxon>Metazoa</taxon>
        <taxon>Chordata</taxon>
        <taxon>Craniata</taxon>
        <taxon>Vertebrata</taxon>
        <taxon>Euteleostomi</taxon>
        <taxon>Actinopterygii</taxon>
        <taxon>Neopterygii</taxon>
        <taxon>Teleostei</taxon>
        <taxon>Neoteleostei</taxon>
        <taxon>Acanthomorphata</taxon>
        <taxon>Eupercaria</taxon>
        <taxon>Tetraodontiformes</taxon>
        <taxon>Tetradontoidea</taxon>
        <taxon>Tetraodontidae</taxon>
        <taxon>Takifugu</taxon>
    </lineage>
</organism>
<dbReference type="EC" id="3.6.4.-" evidence="5"/>
<dbReference type="EMBL" id="U38848">
    <property type="protein sequence ID" value="AAC59890.1"/>
    <property type="molecule type" value="Genomic_DNA"/>
</dbReference>
<dbReference type="PIR" id="S71125">
    <property type="entry name" value="S71125"/>
</dbReference>
<dbReference type="RefSeq" id="XP_003972351.1">
    <property type="nucleotide sequence ID" value="XM_003972302.2"/>
</dbReference>
<dbReference type="SMR" id="P53485"/>
<dbReference type="FunCoup" id="P53485">
    <property type="interactions" value="1844"/>
</dbReference>
<dbReference type="GeneID" id="101079312"/>
<dbReference type="KEGG" id="tru:101079312"/>
<dbReference type="CTD" id="57934"/>
<dbReference type="eggNOG" id="KOG0676">
    <property type="taxonomic scope" value="Eukaryota"/>
</dbReference>
<dbReference type="HOGENOM" id="CLU_027965_0_2_1"/>
<dbReference type="InParanoid" id="P53485"/>
<dbReference type="OrthoDB" id="6953074at2759"/>
<dbReference type="Proteomes" id="UP000005226">
    <property type="component" value="Unplaced"/>
</dbReference>
<dbReference type="GO" id="GO:0005856">
    <property type="term" value="C:cytoskeleton"/>
    <property type="evidence" value="ECO:0000250"/>
    <property type="project" value="AgBase"/>
</dbReference>
<dbReference type="GO" id="GO:0097433">
    <property type="term" value="C:dense body"/>
    <property type="evidence" value="ECO:0000250"/>
    <property type="project" value="AgBase"/>
</dbReference>
<dbReference type="GO" id="GO:0005925">
    <property type="term" value="C:focal adhesion"/>
    <property type="evidence" value="ECO:0000250"/>
    <property type="project" value="AgBase"/>
</dbReference>
<dbReference type="GO" id="GO:0005634">
    <property type="term" value="C:nucleus"/>
    <property type="evidence" value="ECO:0007669"/>
    <property type="project" value="UniProtKB-SubCell"/>
</dbReference>
<dbReference type="GO" id="GO:0005886">
    <property type="term" value="C:plasma membrane"/>
    <property type="evidence" value="ECO:0000250"/>
    <property type="project" value="AgBase"/>
</dbReference>
<dbReference type="GO" id="GO:0005524">
    <property type="term" value="F:ATP binding"/>
    <property type="evidence" value="ECO:0007669"/>
    <property type="project" value="UniProtKB-KW"/>
</dbReference>
<dbReference type="GO" id="GO:0016787">
    <property type="term" value="F:hydrolase activity"/>
    <property type="evidence" value="ECO:0007669"/>
    <property type="project" value="UniProtKB-KW"/>
</dbReference>
<dbReference type="CDD" id="cd10224">
    <property type="entry name" value="ASKHA_NBD_actin"/>
    <property type="match status" value="1"/>
</dbReference>
<dbReference type="FunFam" id="2.30.36.70:FF:000001">
    <property type="entry name" value="Actin, alpha skeletal muscle"/>
    <property type="match status" value="1"/>
</dbReference>
<dbReference type="FunFam" id="3.30.420.40:FF:000131">
    <property type="entry name" value="Actin, alpha skeletal muscle"/>
    <property type="match status" value="1"/>
</dbReference>
<dbReference type="FunFam" id="3.30.420.40:FF:000291">
    <property type="entry name" value="Actin, alpha skeletal muscle"/>
    <property type="match status" value="1"/>
</dbReference>
<dbReference type="FunFam" id="3.90.640.10:FF:000047">
    <property type="entry name" value="Actin, alpha skeletal muscle"/>
    <property type="match status" value="1"/>
</dbReference>
<dbReference type="FunFam" id="3.30.420.40:FF:000058">
    <property type="entry name" value="Putative actin-related protein 5"/>
    <property type="match status" value="1"/>
</dbReference>
<dbReference type="Gene3D" id="3.30.420.40">
    <property type="match status" value="2"/>
</dbReference>
<dbReference type="Gene3D" id="3.90.640.10">
    <property type="entry name" value="Actin, Chain A, domain 4"/>
    <property type="match status" value="1"/>
</dbReference>
<dbReference type="InterPro" id="IPR004000">
    <property type="entry name" value="Actin"/>
</dbReference>
<dbReference type="InterPro" id="IPR020902">
    <property type="entry name" value="Actin/actin-like_CS"/>
</dbReference>
<dbReference type="InterPro" id="IPR004001">
    <property type="entry name" value="Actin_CS"/>
</dbReference>
<dbReference type="InterPro" id="IPR043129">
    <property type="entry name" value="ATPase_NBD"/>
</dbReference>
<dbReference type="PANTHER" id="PTHR11937">
    <property type="entry name" value="ACTIN"/>
    <property type="match status" value="1"/>
</dbReference>
<dbReference type="Pfam" id="PF00022">
    <property type="entry name" value="Actin"/>
    <property type="match status" value="1"/>
</dbReference>
<dbReference type="PRINTS" id="PR00190">
    <property type="entry name" value="ACTIN"/>
</dbReference>
<dbReference type="SMART" id="SM00268">
    <property type="entry name" value="ACTIN"/>
    <property type="match status" value="1"/>
</dbReference>
<dbReference type="SUPFAM" id="SSF53067">
    <property type="entry name" value="Actin-like ATPase domain"/>
    <property type="match status" value="2"/>
</dbReference>
<dbReference type="PROSITE" id="PS00406">
    <property type="entry name" value="ACTINS_1"/>
    <property type="match status" value="1"/>
</dbReference>
<dbReference type="PROSITE" id="PS00432">
    <property type="entry name" value="ACTINS_2"/>
    <property type="match status" value="1"/>
</dbReference>
<dbReference type="PROSITE" id="PS01132">
    <property type="entry name" value="ACTINS_ACT_LIKE"/>
    <property type="match status" value="1"/>
</dbReference>
<name>ACTB2_TAKRU</name>
<comment type="function">
    <text evidence="3">Actin is a highly conserved protein that polymerizes to produce filaments that form cross-linked networks in the cytoplasm of cells. Actin exists in both monomeric (G-actin) and polymeric (F-actin) forms, both forms playing key functions, such as cell motility and contraction. In addition to their role in the cytoplasmic cytoskeleton, G- and F-actin also localize in the nucleus, and regulate gene transcription and motility and repair of damaged DNA.</text>
</comment>
<comment type="catalytic activity">
    <reaction evidence="5">
        <text>ATP + H2O = ADP + phosphate + H(+)</text>
        <dbReference type="Rhea" id="RHEA:13065"/>
        <dbReference type="ChEBI" id="CHEBI:15377"/>
        <dbReference type="ChEBI" id="CHEBI:15378"/>
        <dbReference type="ChEBI" id="CHEBI:30616"/>
        <dbReference type="ChEBI" id="CHEBI:43474"/>
        <dbReference type="ChEBI" id="CHEBI:456216"/>
    </reaction>
</comment>
<comment type="subunit">
    <text evidence="3 4">Polymerization of globular actin (G-actin) leads to a structural filament (F-actin) in the form of a two-stranded helix (By similarity). Each actin can bind to 4 others (By similarity).</text>
</comment>
<comment type="subcellular location">
    <subcellularLocation>
        <location evidence="4">Cytoplasm</location>
        <location evidence="4">Cytoskeleton</location>
    </subcellularLocation>
    <subcellularLocation>
        <location evidence="1">Nucleus</location>
    </subcellularLocation>
</comment>
<comment type="PTM">
    <molecule>Actin, cytoplasmic 2</molecule>
    <text evidence="3">N-terminal cleavage of acetylated methionine of immature cytoplasmic actin by ACTMAP.</text>
</comment>
<comment type="PTM">
    <text evidence="4">Oxidation of Met-44 and Met-47 by MICALs (mical1, mical2 or mical3) to form methionine sulfoxide promotes actin filament depolymerization. Mical1 and mical2 produce the (R)-S-oxide form. The (R)-S-oxide form is reverted by msrb1 and msrb2, which promote actin repolymerization.</text>
</comment>
<comment type="PTM">
    <text evidence="2">Methylation at His-73 by SETD3. Methylation stabilizes actin filaments.</text>
</comment>
<comment type="miscellaneous">
    <text evidence="6">There are three different beta-cytoplasmic actins in Fugu rubripes.</text>
</comment>
<comment type="miscellaneous">
    <text evidence="1">In vertebrates 3 main groups of actin isoforms, alpha, beta and gamma have been identified. The alpha actins are found in muscle tissues and are a major constituent of the contractile apparatus. The beta and gamma actins coexist in most cell types as components of the cytoskeleton and as mediators of internal cell motility.</text>
</comment>
<comment type="similarity">
    <text evidence="6">Belongs to the actin family.</text>
</comment>
<sequence>MDDEIAALVVDNGSGMCKAGFAGDDAPRAVFPSIVGRPRHQGVMVGMGQKDSYVGDEAQSKRGILTLKYPIEHGIVTNWDDMEKIWHHTFYNELRVAPEEHPVLLTEAPLNPKANREKMTQIMFETFNTPAMYVAIQAVLSLYASGRTTGIVMDSGDGVTHTVPIYEGYALPHAILRLDLAGRDLTDYLMKILTERGYSFTTTAEREIVRDIKEKLCYVALDFEQEMGTAASSSSLEKSYELPDGQVITIGNERFRCPEALFQPSFLGMESCGIHETTFNSIMKCDVDIRKDLYANTVLSGGTTMYPGIADRMQKEITSLAPTTMKIKIIAPPERKYSVWIGGSILASLSTFQQMWISKQEYDESGPSIVHRKCF</sequence>
<proteinExistence type="inferred from homology"/>
<feature type="chain" id="PRO_0000367095" description="Actin, cytoplasmic 2">
    <location>
        <begin position="1"/>
        <end position="375"/>
    </location>
</feature>
<feature type="initiator methionine" description="Removed; alternate" evidence="2">
    <location>
        <position position="1"/>
    </location>
</feature>
<feature type="chain" id="PRO_0000000811" description="Actin, cytoplasmic 2, N-terminally processed">
    <location>
        <begin position="2"/>
        <end position="375"/>
    </location>
</feature>
<feature type="modified residue" description="N-acetylmethionine; in Actin, cytoplasmic 2; alternate" evidence="2">
    <location>
        <position position="1"/>
    </location>
</feature>
<feature type="modified residue" description="N-acetylaspartate; in Actin, cytoplasmic 2, N-terminally processed" evidence="2">
    <location>
        <position position="2"/>
    </location>
</feature>
<feature type="modified residue" description="Methionine (R)-sulfoxide" evidence="4">
    <location>
        <position position="44"/>
    </location>
</feature>
<feature type="modified residue" description="Methionine (R)-sulfoxide" evidence="4">
    <location>
        <position position="47"/>
    </location>
</feature>
<feature type="modified residue" description="Tele-methylhistidine" evidence="4">
    <location>
        <position position="73"/>
    </location>
</feature>
<keyword id="KW-0007">Acetylation</keyword>
<keyword id="KW-0067">ATP-binding</keyword>
<keyword id="KW-0963">Cytoplasm</keyword>
<keyword id="KW-0206">Cytoskeleton</keyword>
<keyword id="KW-0378">Hydrolase</keyword>
<keyword id="KW-0488">Methylation</keyword>
<keyword id="KW-0547">Nucleotide-binding</keyword>
<keyword id="KW-0539">Nucleus</keyword>
<keyword id="KW-0558">Oxidation</keyword>
<keyword id="KW-1185">Reference proteome</keyword>
<gene>
    <name type="primary">actbb</name>
</gene>
<protein>
    <recommendedName>
        <fullName>Actin, cytoplasmic 2</fullName>
        <ecNumber evidence="5">3.6.4.-</ecNumber>
    </recommendedName>
    <alternativeName>
        <fullName>Beta-actin B</fullName>
    </alternativeName>
    <component>
        <recommendedName>
            <fullName>Actin, cytoplasmic 2, N-terminally processed</fullName>
        </recommendedName>
    </component>
</protein>
<accession>P53485</accession>
<evidence type="ECO:0000250" key="1">
    <source>
        <dbReference type="UniProtKB" id="O93400"/>
    </source>
</evidence>
<evidence type="ECO:0000250" key="2">
    <source>
        <dbReference type="UniProtKB" id="P60706"/>
    </source>
</evidence>
<evidence type="ECO:0000250" key="3">
    <source>
        <dbReference type="UniProtKB" id="P60709"/>
    </source>
</evidence>
<evidence type="ECO:0000250" key="4">
    <source>
        <dbReference type="UniProtKB" id="P60710"/>
    </source>
</evidence>
<evidence type="ECO:0000250" key="5">
    <source>
        <dbReference type="UniProtKB" id="P68137"/>
    </source>
</evidence>
<evidence type="ECO:0000305" key="6"/>